<dbReference type="EC" id="3.1.-.-" evidence="1"/>
<dbReference type="EMBL" id="CU928168">
    <property type="protein sequence ID" value="CAR22506.1"/>
    <property type="molecule type" value="Genomic_DNA"/>
</dbReference>
<dbReference type="RefSeq" id="XP_002552944.1">
    <property type="nucleotide sequence ID" value="XM_002552898.1"/>
</dbReference>
<dbReference type="SMR" id="C5DGG4"/>
<dbReference type="FunCoup" id="C5DGG4">
    <property type="interactions" value="1120"/>
</dbReference>
<dbReference type="STRING" id="559295.C5DGG4"/>
<dbReference type="GeneID" id="8295172"/>
<dbReference type="KEGG" id="lth:KLTH0D05126g"/>
<dbReference type="eggNOG" id="KOG2519">
    <property type="taxonomic scope" value="Eukaryota"/>
</dbReference>
<dbReference type="HOGENOM" id="CLU_032444_2_0_1"/>
<dbReference type="InParanoid" id="C5DGG4"/>
<dbReference type="OMA" id="MGIPWVQ"/>
<dbReference type="OrthoDB" id="1937206at2759"/>
<dbReference type="Proteomes" id="UP000002036">
    <property type="component" value="Chromosome D"/>
</dbReference>
<dbReference type="GO" id="GO:0005739">
    <property type="term" value="C:mitochondrion"/>
    <property type="evidence" value="ECO:0007669"/>
    <property type="project" value="UniProtKB-SubCell"/>
</dbReference>
<dbReference type="GO" id="GO:0005730">
    <property type="term" value="C:nucleolus"/>
    <property type="evidence" value="ECO:0007669"/>
    <property type="project" value="UniProtKB-SubCell"/>
</dbReference>
<dbReference type="GO" id="GO:0005654">
    <property type="term" value="C:nucleoplasm"/>
    <property type="evidence" value="ECO:0007669"/>
    <property type="project" value="UniProtKB-SubCell"/>
</dbReference>
<dbReference type="GO" id="GO:0008409">
    <property type="term" value="F:5'-3' exonuclease activity"/>
    <property type="evidence" value="ECO:0007669"/>
    <property type="project" value="UniProtKB-UniRule"/>
</dbReference>
<dbReference type="GO" id="GO:0017108">
    <property type="term" value="F:5'-flap endonuclease activity"/>
    <property type="evidence" value="ECO:0007669"/>
    <property type="project" value="UniProtKB-UniRule"/>
</dbReference>
<dbReference type="GO" id="GO:0003677">
    <property type="term" value="F:DNA binding"/>
    <property type="evidence" value="ECO:0007669"/>
    <property type="project" value="UniProtKB-UniRule"/>
</dbReference>
<dbReference type="GO" id="GO:0000287">
    <property type="term" value="F:magnesium ion binding"/>
    <property type="evidence" value="ECO:0007669"/>
    <property type="project" value="UniProtKB-UniRule"/>
</dbReference>
<dbReference type="GO" id="GO:0006284">
    <property type="term" value="P:base-excision repair"/>
    <property type="evidence" value="ECO:0007669"/>
    <property type="project" value="UniProtKB-UniRule"/>
</dbReference>
<dbReference type="GO" id="GO:0043137">
    <property type="term" value="P:DNA replication, removal of RNA primer"/>
    <property type="evidence" value="ECO:0007669"/>
    <property type="project" value="UniProtKB-UniRule"/>
</dbReference>
<dbReference type="CDD" id="cd09907">
    <property type="entry name" value="H3TH_FEN1-Euk"/>
    <property type="match status" value="1"/>
</dbReference>
<dbReference type="CDD" id="cd09867">
    <property type="entry name" value="PIN_FEN1"/>
    <property type="match status" value="1"/>
</dbReference>
<dbReference type="FunFam" id="1.10.150.20:FF:000009">
    <property type="entry name" value="Flap endonuclease 1"/>
    <property type="match status" value="1"/>
</dbReference>
<dbReference type="FunFam" id="3.40.50.1010:FF:000003">
    <property type="entry name" value="Flap endonuclease 1"/>
    <property type="match status" value="1"/>
</dbReference>
<dbReference type="Gene3D" id="1.10.150.20">
    <property type="entry name" value="5' to 3' exonuclease, C-terminal subdomain"/>
    <property type="match status" value="1"/>
</dbReference>
<dbReference type="Gene3D" id="3.40.50.1010">
    <property type="entry name" value="5'-nuclease"/>
    <property type="match status" value="1"/>
</dbReference>
<dbReference type="HAMAP" id="MF_00614">
    <property type="entry name" value="Fen"/>
    <property type="match status" value="1"/>
</dbReference>
<dbReference type="InterPro" id="IPR036279">
    <property type="entry name" value="5-3_exonuclease_C_sf"/>
</dbReference>
<dbReference type="InterPro" id="IPR023426">
    <property type="entry name" value="Flap_endonuc"/>
</dbReference>
<dbReference type="InterPro" id="IPR008918">
    <property type="entry name" value="HhH2"/>
</dbReference>
<dbReference type="InterPro" id="IPR029060">
    <property type="entry name" value="PIN-like_dom_sf"/>
</dbReference>
<dbReference type="InterPro" id="IPR006086">
    <property type="entry name" value="XPG-I_dom"/>
</dbReference>
<dbReference type="InterPro" id="IPR006084">
    <property type="entry name" value="XPG/Rad2"/>
</dbReference>
<dbReference type="InterPro" id="IPR019974">
    <property type="entry name" value="XPG_CS"/>
</dbReference>
<dbReference type="InterPro" id="IPR006085">
    <property type="entry name" value="XPG_DNA_repair_N"/>
</dbReference>
<dbReference type="PANTHER" id="PTHR11081:SF9">
    <property type="entry name" value="FLAP ENDONUCLEASE 1"/>
    <property type="match status" value="1"/>
</dbReference>
<dbReference type="PANTHER" id="PTHR11081">
    <property type="entry name" value="FLAP ENDONUCLEASE FAMILY MEMBER"/>
    <property type="match status" value="1"/>
</dbReference>
<dbReference type="Pfam" id="PF00867">
    <property type="entry name" value="XPG_I"/>
    <property type="match status" value="1"/>
</dbReference>
<dbReference type="Pfam" id="PF00752">
    <property type="entry name" value="XPG_N"/>
    <property type="match status" value="1"/>
</dbReference>
<dbReference type="PRINTS" id="PR00853">
    <property type="entry name" value="XPGRADSUPER"/>
</dbReference>
<dbReference type="SMART" id="SM00279">
    <property type="entry name" value="HhH2"/>
    <property type="match status" value="1"/>
</dbReference>
<dbReference type="SMART" id="SM00484">
    <property type="entry name" value="XPGI"/>
    <property type="match status" value="1"/>
</dbReference>
<dbReference type="SMART" id="SM00485">
    <property type="entry name" value="XPGN"/>
    <property type="match status" value="1"/>
</dbReference>
<dbReference type="SUPFAM" id="SSF47807">
    <property type="entry name" value="5' to 3' exonuclease, C-terminal subdomain"/>
    <property type="match status" value="1"/>
</dbReference>
<dbReference type="SUPFAM" id="SSF88723">
    <property type="entry name" value="PIN domain-like"/>
    <property type="match status" value="1"/>
</dbReference>
<dbReference type="PROSITE" id="PS00841">
    <property type="entry name" value="XPG_1"/>
    <property type="match status" value="1"/>
</dbReference>
<dbReference type="PROSITE" id="PS00842">
    <property type="entry name" value="XPG_2"/>
    <property type="match status" value="1"/>
</dbReference>
<gene>
    <name evidence="1" type="primary">FEN1</name>
    <name type="ordered locus">KLTH0D05126g</name>
</gene>
<reference key="1">
    <citation type="journal article" date="2009" name="Genome Res.">
        <title>Comparative genomics of protoploid Saccharomycetaceae.</title>
        <authorList>
            <consortium name="The Genolevures Consortium"/>
            <person name="Souciet J.-L."/>
            <person name="Dujon B."/>
            <person name="Gaillardin C."/>
            <person name="Johnston M."/>
            <person name="Baret P.V."/>
            <person name="Cliften P."/>
            <person name="Sherman D.J."/>
            <person name="Weissenbach J."/>
            <person name="Westhof E."/>
            <person name="Wincker P."/>
            <person name="Jubin C."/>
            <person name="Poulain J."/>
            <person name="Barbe V."/>
            <person name="Segurens B."/>
            <person name="Artiguenave F."/>
            <person name="Anthouard V."/>
            <person name="Vacherie B."/>
            <person name="Val M.-E."/>
            <person name="Fulton R.S."/>
            <person name="Minx P."/>
            <person name="Wilson R."/>
            <person name="Durrens P."/>
            <person name="Jean G."/>
            <person name="Marck C."/>
            <person name="Martin T."/>
            <person name="Nikolski M."/>
            <person name="Rolland T."/>
            <person name="Seret M.-L."/>
            <person name="Casaregola S."/>
            <person name="Despons L."/>
            <person name="Fairhead C."/>
            <person name="Fischer G."/>
            <person name="Lafontaine I."/>
            <person name="Leh V."/>
            <person name="Lemaire M."/>
            <person name="de Montigny J."/>
            <person name="Neuveglise C."/>
            <person name="Thierry A."/>
            <person name="Blanc-Lenfle I."/>
            <person name="Bleykasten C."/>
            <person name="Diffels J."/>
            <person name="Fritsch E."/>
            <person name="Frangeul L."/>
            <person name="Goeffon A."/>
            <person name="Jauniaux N."/>
            <person name="Kachouri-Lafond R."/>
            <person name="Payen C."/>
            <person name="Potier S."/>
            <person name="Pribylova L."/>
            <person name="Ozanne C."/>
            <person name="Richard G.-F."/>
            <person name="Sacerdot C."/>
            <person name="Straub M.-L."/>
            <person name="Talla E."/>
        </authorList>
    </citation>
    <scope>NUCLEOTIDE SEQUENCE [LARGE SCALE GENOMIC DNA]</scope>
    <source>
        <strain>ATCC 56472 / CBS 6340 / NRRL Y-8284</strain>
    </source>
</reference>
<evidence type="ECO:0000255" key="1">
    <source>
        <dbReference type="HAMAP-Rule" id="MF_03140"/>
    </source>
</evidence>
<evidence type="ECO:0000256" key="2">
    <source>
        <dbReference type="SAM" id="MobiDB-lite"/>
    </source>
</evidence>
<sequence length="385" mass="43294">MGIKGLNAIISEHVPSAVRKSEIKNFFGRKVAIDASMSLYQFLIAVRQQDGVQLASESGETTSHLMGIFYRTLRMIDNGIKPCYVFDGKPPVLKSHELSKRSARRATTEEKLKEAVEEAEKLKHERRLVKVTPEHNEEAKKLLRLMGLPYVEAPCEAEAQCAELAKAGKVYAAASEDMDTLCYRTPFLLRHLTFSEAKKEPIHEINTEILLQGLELSIEQFIDLGIMLGCDYCDSIRGVGPVTALKLIKEHKTLENIVEYIESGQANNKWKVPENWPFKEARQLFLDPDVVKGSEVDLKWSEPQEQELVDFMCKEKGFNEERIRSGIKRLQKGLKTGVQGRLDGFFKVKPKNKEQLAAANAKAKSTKAGKQATKGKVGKPGRPRK</sequence>
<keyword id="KW-0227">DNA damage</keyword>
<keyword id="KW-0234">DNA repair</keyword>
<keyword id="KW-0235">DNA replication</keyword>
<keyword id="KW-0255">Endonuclease</keyword>
<keyword id="KW-0269">Exonuclease</keyword>
<keyword id="KW-0378">Hydrolase</keyword>
<keyword id="KW-0460">Magnesium</keyword>
<keyword id="KW-0479">Metal-binding</keyword>
<keyword id="KW-0496">Mitochondrion</keyword>
<keyword id="KW-0540">Nuclease</keyword>
<keyword id="KW-0539">Nucleus</keyword>
<keyword id="KW-0597">Phosphoprotein</keyword>
<keyword id="KW-1185">Reference proteome</keyword>
<proteinExistence type="inferred from homology"/>
<feature type="chain" id="PRO_0000403582" description="Flap endonuclease 1">
    <location>
        <begin position="1"/>
        <end position="385"/>
    </location>
</feature>
<feature type="region of interest" description="N-domain">
    <location>
        <begin position="1"/>
        <end position="105"/>
    </location>
</feature>
<feature type="region of interest" description="I-domain">
    <location>
        <begin position="120"/>
        <end position="251"/>
    </location>
</feature>
<feature type="region of interest" description="Interaction with PCNA" evidence="1">
    <location>
        <begin position="338"/>
        <end position="346"/>
    </location>
</feature>
<feature type="region of interest" description="Disordered" evidence="2">
    <location>
        <begin position="356"/>
        <end position="385"/>
    </location>
</feature>
<feature type="compositionally biased region" description="Low complexity" evidence="2">
    <location>
        <begin position="356"/>
        <end position="370"/>
    </location>
</feature>
<feature type="compositionally biased region" description="Basic residues" evidence="2">
    <location>
        <begin position="376"/>
        <end position="385"/>
    </location>
</feature>
<feature type="binding site" evidence="1">
    <location>
        <position position="34"/>
    </location>
    <ligand>
        <name>Mg(2+)</name>
        <dbReference type="ChEBI" id="CHEBI:18420"/>
        <label>1</label>
    </ligand>
</feature>
<feature type="binding site" evidence="1">
    <location>
        <position position="47"/>
    </location>
    <ligand>
        <name>DNA</name>
        <dbReference type="ChEBI" id="CHEBI:16991"/>
    </ligand>
</feature>
<feature type="binding site" evidence="1">
    <location>
        <position position="71"/>
    </location>
    <ligand>
        <name>DNA</name>
        <dbReference type="ChEBI" id="CHEBI:16991"/>
    </ligand>
</feature>
<feature type="binding site" evidence="1">
    <location>
        <position position="87"/>
    </location>
    <ligand>
        <name>Mg(2+)</name>
        <dbReference type="ChEBI" id="CHEBI:18420"/>
        <label>1</label>
    </ligand>
</feature>
<feature type="binding site" evidence="1">
    <location>
        <position position="156"/>
    </location>
    <ligand>
        <name>DNA</name>
        <dbReference type="ChEBI" id="CHEBI:16991"/>
    </ligand>
</feature>
<feature type="binding site" evidence="1">
    <location>
        <position position="156"/>
    </location>
    <ligand>
        <name>Mg(2+)</name>
        <dbReference type="ChEBI" id="CHEBI:18420"/>
        <label>1</label>
    </ligand>
</feature>
<feature type="binding site" evidence="1">
    <location>
        <position position="158"/>
    </location>
    <ligand>
        <name>Mg(2+)</name>
        <dbReference type="ChEBI" id="CHEBI:18420"/>
        <label>1</label>
    </ligand>
</feature>
<feature type="binding site" evidence="1">
    <location>
        <position position="177"/>
    </location>
    <ligand>
        <name>Mg(2+)</name>
        <dbReference type="ChEBI" id="CHEBI:18420"/>
        <label>2</label>
    </ligand>
</feature>
<feature type="binding site" evidence="1">
    <location>
        <position position="179"/>
    </location>
    <ligand>
        <name>Mg(2+)</name>
        <dbReference type="ChEBI" id="CHEBI:18420"/>
        <label>2</label>
    </ligand>
</feature>
<feature type="binding site" evidence="1">
    <location>
        <position position="229"/>
    </location>
    <ligand>
        <name>DNA</name>
        <dbReference type="ChEBI" id="CHEBI:16991"/>
    </ligand>
</feature>
<feature type="binding site" evidence="1">
    <location>
        <position position="231"/>
    </location>
    <ligand>
        <name>DNA</name>
        <dbReference type="ChEBI" id="CHEBI:16991"/>
    </ligand>
</feature>
<feature type="binding site" evidence="1">
    <location>
        <position position="231"/>
    </location>
    <ligand>
        <name>Mg(2+)</name>
        <dbReference type="ChEBI" id="CHEBI:18420"/>
        <label>2</label>
    </ligand>
</feature>
<comment type="function">
    <text evidence="1">Structure-specific nuclease with 5'-flap endonuclease and 5'-3' exonuclease activities involved in DNA replication and repair. During DNA replication, cleaves the 5'-overhanging flap structure that is generated by displacement synthesis when DNA polymerase encounters the 5'-end of a downstream Okazaki fragment. It enters the flap from the 5'-end and then tracks to cleave the flap base, leaving a nick for ligation. Also involved in the long patch base excision repair (LP-BER) pathway, by cleaving within the apurinic/apyrimidinic (AP) site-terminated flap. Acts as a genome stabilization factor that prevents flaps from equilibrating into structures that lead to duplications and deletions. Also possesses 5'-3' exonuclease activity on nicked or gapped double-stranded DNA, and exhibits RNase H activity. Also involved in replication and repair of rDNA and in repairing mitochondrial DNA.</text>
</comment>
<comment type="cofactor">
    <cofactor evidence="1">
        <name>Mg(2+)</name>
        <dbReference type="ChEBI" id="CHEBI:18420"/>
    </cofactor>
    <text evidence="1">Binds 2 magnesium ions per subunit. They probably participate in the reaction catalyzed by the enzyme. May bind an additional third magnesium ion after substrate binding.</text>
</comment>
<comment type="subunit">
    <text evidence="1">Interacts with PCNA. Three molecules of FEN1 bind to one PCNA trimer with each molecule binding to one PCNA monomer. PCNA stimulates the nuclease activity without altering cleavage specificity.</text>
</comment>
<comment type="subcellular location">
    <subcellularLocation>
        <location evidence="1">Nucleus</location>
        <location evidence="1">Nucleolus</location>
    </subcellularLocation>
    <subcellularLocation>
        <location evidence="1">Nucleus</location>
        <location evidence="1">Nucleoplasm</location>
    </subcellularLocation>
    <subcellularLocation>
        <location evidence="1">Mitochondrion</location>
    </subcellularLocation>
    <text evidence="1">Resides mostly in the nucleoli and relocalizes to the nucleoplasm upon DNA damage.</text>
</comment>
<comment type="PTM">
    <text evidence="1">Phosphorylated. Phosphorylation upon DNA damage induces relocalization to the nuclear plasma.</text>
</comment>
<comment type="similarity">
    <text evidence="1">Belongs to the XPG/RAD2 endonuclease family. FEN1 subfamily.</text>
</comment>
<organism>
    <name type="scientific">Lachancea thermotolerans (strain ATCC 56472 / CBS 6340 / NRRL Y-8284)</name>
    <name type="common">Yeast</name>
    <name type="synonym">Kluyveromyces thermotolerans</name>
    <dbReference type="NCBI Taxonomy" id="559295"/>
    <lineage>
        <taxon>Eukaryota</taxon>
        <taxon>Fungi</taxon>
        <taxon>Dikarya</taxon>
        <taxon>Ascomycota</taxon>
        <taxon>Saccharomycotina</taxon>
        <taxon>Saccharomycetes</taxon>
        <taxon>Saccharomycetales</taxon>
        <taxon>Saccharomycetaceae</taxon>
        <taxon>Lachancea</taxon>
    </lineage>
</organism>
<accession>C5DGG4</accession>
<protein>
    <recommendedName>
        <fullName evidence="1">Flap endonuclease 1</fullName>
        <shortName evidence="1">FEN-1</shortName>
        <ecNumber evidence="1">3.1.-.-</ecNumber>
    </recommendedName>
    <alternativeName>
        <fullName evidence="1">Flap structure-specific endonuclease 1</fullName>
    </alternativeName>
</protein>
<name>FEN1_LACTC</name>